<protein>
    <recommendedName>
        <fullName evidence="1">Enolase</fullName>
        <ecNumber evidence="1">4.2.1.11</ecNumber>
    </recommendedName>
    <alternativeName>
        <fullName evidence="1">2-phospho-D-glycerate hydro-lyase</fullName>
    </alternativeName>
    <alternativeName>
        <fullName evidence="1">2-phosphoglycerate dehydratase</fullName>
    </alternativeName>
</protein>
<name>ENO_METPP</name>
<proteinExistence type="inferred from homology"/>
<comment type="function">
    <text evidence="1">Catalyzes the reversible conversion of 2-phosphoglycerate (2-PG) into phosphoenolpyruvate (PEP). It is essential for the degradation of carbohydrates via glycolysis.</text>
</comment>
<comment type="catalytic activity">
    <reaction evidence="1">
        <text>(2R)-2-phosphoglycerate = phosphoenolpyruvate + H2O</text>
        <dbReference type="Rhea" id="RHEA:10164"/>
        <dbReference type="ChEBI" id="CHEBI:15377"/>
        <dbReference type="ChEBI" id="CHEBI:58289"/>
        <dbReference type="ChEBI" id="CHEBI:58702"/>
        <dbReference type="EC" id="4.2.1.11"/>
    </reaction>
</comment>
<comment type="cofactor">
    <cofactor evidence="1">
        <name>Mg(2+)</name>
        <dbReference type="ChEBI" id="CHEBI:18420"/>
    </cofactor>
    <text evidence="1">Binds a second Mg(2+) ion via substrate during catalysis.</text>
</comment>
<comment type="pathway">
    <text evidence="1">Carbohydrate degradation; glycolysis; pyruvate from D-glyceraldehyde 3-phosphate: step 4/5.</text>
</comment>
<comment type="subcellular location">
    <subcellularLocation>
        <location evidence="1">Cytoplasm</location>
    </subcellularLocation>
    <subcellularLocation>
        <location evidence="1">Secreted</location>
    </subcellularLocation>
    <subcellularLocation>
        <location evidence="1">Cell surface</location>
    </subcellularLocation>
    <text evidence="1">Fractions of enolase are present in both the cytoplasm and on the cell surface.</text>
</comment>
<comment type="similarity">
    <text evidence="1">Belongs to the enolase family.</text>
</comment>
<gene>
    <name evidence="1" type="primary">eno</name>
    <name type="ordered locus">Mpe_A2847</name>
</gene>
<organism>
    <name type="scientific">Methylibium petroleiphilum (strain ATCC BAA-1232 / LMG 22953 / PM1)</name>
    <dbReference type="NCBI Taxonomy" id="420662"/>
    <lineage>
        <taxon>Bacteria</taxon>
        <taxon>Pseudomonadati</taxon>
        <taxon>Pseudomonadota</taxon>
        <taxon>Betaproteobacteria</taxon>
        <taxon>Burkholderiales</taxon>
        <taxon>Sphaerotilaceae</taxon>
        <taxon>Methylibium</taxon>
    </lineage>
</organism>
<sequence length="433" mass="45943">MSAIVDIVGREILDSRGNPTVECDVLLESGVMGRAAVPSGASTGSREAIELRDGDKGRYLGKGVLKAVEHLNTEVSEAVLGLDASEQAFLDKTLIDLDGTDNKARIGANATLAVSMAVARAAAEESGLPLYRYFGGMGGMQLPVPMMNVVNGGAHANNSLDLQELMIIPVGAPSFREAVRWGAETFHALKKILHDKGISTAVGDEGGFAPSVENHEAAIQMILEAIDKAGYTPGTQIALGLDCAASEFYKPGKNGSLVYQLDGEGGLSLSAQQWTDMLAGWVDKYPIISIEDGMAEGDWAGWAHLTEVLGKKVQLVGDDLFVTNTKILQEGIDKGIANSILIKINQIGTLTETFAAIEMAKRAGYTAVISHRSGETEDSTIADIAVGTNAGQIKTGSLSRSDRMAKYNQLLRIEEDLGDVAVYPGRAAFYNLR</sequence>
<evidence type="ECO:0000255" key="1">
    <source>
        <dbReference type="HAMAP-Rule" id="MF_00318"/>
    </source>
</evidence>
<feature type="chain" id="PRO_1000019220" description="Enolase">
    <location>
        <begin position="1"/>
        <end position="433"/>
    </location>
</feature>
<feature type="active site" description="Proton donor" evidence="1">
    <location>
        <position position="205"/>
    </location>
</feature>
<feature type="active site" description="Proton acceptor" evidence="1">
    <location>
        <position position="343"/>
    </location>
</feature>
<feature type="binding site" evidence="1">
    <location>
        <position position="163"/>
    </location>
    <ligand>
        <name>(2R)-2-phosphoglycerate</name>
        <dbReference type="ChEBI" id="CHEBI:58289"/>
    </ligand>
</feature>
<feature type="binding site" evidence="1">
    <location>
        <position position="242"/>
    </location>
    <ligand>
        <name>Mg(2+)</name>
        <dbReference type="ChEBI" id="CHEBI:18420"/>
    </ligand>
</feature>
<feature type="binding site" evidence="1">
    <location>
        <position position="291"/>
    </location>
    <ligand>
        <name>Mg(2+)</name>
        <dbReference type="ChEBI" id="CHEBI:18420"/>
    </ligand>
</feature>
<feature type="binding site" evidence="1">
    <location>
        <position position="318"/>
    </location>
    <ligand>
        <name>Mg(2+)</name>
        <dbReference type="ChEBI" id="CHEBI:18420"/>
    </ligand>
</feature>
<feature type="binding site" evidence="1">
    <location>
        <position position="343"/>
    </location>
    <ligand>
        <name>(2R)-2-phosphoglycerate</name>
        <dbReference type="ChEBI" id="CHEBI:58289"/>
    </ligand>
</feature>
<feature type="binding site" evidence="1">
    <location>
        <position position="372"/>
    </location>
    <ligand>
        <name>(2R)-2-phosphoglycerate</name>
        <dbReference type="ChEBI" id="CHEBI:58289"/>
    </ligand>
</feature>
<feature type="binding site" evidence="1">
    <location>
        <position position="373"/>
    </location>
    <ligand>
        <name>(2R)-2-phosphoglycerate</name>
        <dbReference type="ChEBI" id="CHEBI:58289"/>
    </ligand>
</feature>
<feature type="binding site" evidence="1">
    <location>
        <position position="394"/>
    </location>
    <ligand>
        <name>(2R)-2-phosphoglycerate</name>
        <dbReference type="ChEBI" id="CHEBI:58289"/>
    </ligand>
</feature>
<dbReference type="EC" id="4.2.1.11" evidence="1"/>
<dbReference type="EMBL" id="CP000555">
    <property type="protein sequence ID" value="ABM95801.1"/>
    <property type="molecule type" value="Genomic_DNA"/>
</dbReference>
<dbReference type="RefSeq" id="WP_011830430.1">
    <property type="nucleotide sequence ID" value="NC_008825.1"/>
</dbReference>
<dbReference type="SMR" id="A2SJR2"/>
<dbReference type="STRING" id="420662.Mpe_A2847"/>
<dbReference type="KEGG" id="mpt:Mpe_A2847"/>
<dbReference type="eggNOG" id="COG0148">
    <property type="taxonomic scope" value="Bacteria"/>
</dbReference>
<dbReference type="HOGENOM" id="CLU_031223_2_1_4"/>
<dbReference type="UniPathway" id="UPA00109">
    <property type="reaction ID" value="UER00187"/>
</dbReference>
<dbReference type="Proteomes" id="UP000000366">
    <property type="component" value="Chromosome"/>
</dbReference>
<dbReference type="GO" id="GO:0009986">
    <property type="term" value="C:cell surface"/>
    <property type="evidence" value="ECO:0007669"/>
    <property type="project" value="UniProtKB-SubCell"/>
</dbReference>
<dbReference type="GO" id="GO:0005576">
    <property type="term" value="C:extracellular region"/>
    <property type="evidence" value="ECO:0007669"/>
    <property type="project" value="UniProtKB-SubCell"/>
</dbReference>
<dbReference type="GO" id="GO:0000015">
    <property type="term" value="C:phosphopyruvate hydratase complex"/>
    <property type="evidence" value="ECO:0007669"/>
    <property type="project" value="InterPro"/>
</dbReference>
<dbReference type="GO" id="GO:0000287">
    <property type="term" value="F:magnesium ion binding"/>
    <property type="evidence" value="ECO:0007669"/>
    <property type="project" value="UniProtKB-UniRule"/>
</dbReference>
<dbReference type="GO" id="GO:0004634">
    <property type="term" value="F:phosphopyruvate hydratase activity"/>
    <property type="evidence" value="ECO:0007669"/>
    <property type="project" value="UniProtKB-UniRule"/>
</dbReference>
<dbReference type="GO" id="GO:0006096">
    <property type="term" value="P:glycolytic process"/>
    <property type="evidence" value="ECO:0007669"/>
    <property type="project" value="UniProtKB-UniRule"/>
</dbReference>
<dbReference type="CDD" id="cd03313">
    <property type="entry name" value="enolase"/>
    <property type="match status" value="1"/>
</dbReference>
<dbReference type="FunFam" id="3.20.20.120:FF:000001">
    <property type="entry name" value="Enolase"/>
    <property type="match status" value="1"/>
</dbReference>
<dbReference type="FunFam" id="3.30.390.10:FF:000001">
    <property type="entry name" value="Enolase"/>
    <property type="match status" value="1"/>
</dbReference>
<dbReference type="Gene3D" id="3.20.20.120">
    <property type="entry name" value="Enolase-like C-terminal domain"/>
    <property type="match status" value="1"/>
</dbReference>
<dbReference type="Gene3D" id="3.30.390.10">
    <property type="entry name" value="Enolase-like, N-terminal domain"/>
    <property type="match status" value="1"/>
</dbReference>
<dbReference type="HAMAP" id="MF_00318">
    <property type="entry name" value="Enolase"/>
    <property type="match status" value="1"/>
</dbReference>
<dbReference type="InterPro" id="IPR000941">
    <property type="entry name" value="Enolase"/>
</dbReference>
<dbReference type="InterPro" id="IPR036849">
    <property type="entry name" value="Enolase-like_C_sf"/>
</dbReference>
<dbReference type="InterPro" id="IPR029017">
    <property type="entry name" value="Enolase-like_N"/>
</dbReference>
<dbReference type="InterPro" id="IPR020810">
    <property type="entry name" value="Enolase_C"/>
</dbReference>
<dbReference type="InterPro" id="IPR020809">
    <property type="entry name" value="Enolase_CS"/>
</dbReference>
<dbReference type="InterPro" id="IPR020811">
    <property type="entry name" value="Enolase_N"/>
</dbReference>
<dbReference type="NCBIfam" id="TIGR01060">
    <property type="entry name" value="eno"/>
    <property type="match status" value="1"/>
</dbReference>
<dbReference type="PANTHER" id="PTHR11902">
    <property type="entry name" value="ENOLASE"/>
    <property type="match status" value="1"/>
</dbReference>
<dbReference type="PANTHER" id="PTHR11902:SF1">
    <property type="entry name" value="ENOLASE"/>
    <property type="match status" value="1"/>
</dbReference>
<dbReference type="Pfam" id="PF00113">
    <property type="entry name" value="Enolase_C"/>
    <property type="match status" value="1"/>
</dbReference>
<dbReference type="Pfam" id="PF03952">
    <property type="entry name" value="Enolase_N"/>
    <property type="match status" value="1"/>
</dbReference>
<dbReference type="PIRSF" id="PIRSF001400">
    <property type="entry name" value="Enolase"/>
    <property type="match status" value="1"/>
</dbReference>
<dbReference type="PRINTS" id="PR00148">
    <property type="entry name" value="ENOLASE"/>
</dbReference>
<dbReference type="SFLD" id="SFLDF00002">
    <property type="entry name" value="enolase"/>
    <property type="match status" value="1"/>
</dbReference>
<dbReference type="SFLD" id="SFLDG00178">
    <property type="entry name" value="enolase"/>
    <property type="match status" value="1"/>
</dbReference>
<dbReference type="SMART" id="SM01192">
    <property type="entry name" value="Enolase_C"/>
    <property type="match status" value="1"/>
</dbReference>
<dbReference type="SMART" id="SM01193">
    <property type="entry name" value="Enolase_N"/>
    <property type="match status" value="1"/>
</dbReference>
<dbReference type="SUPFAM" id="SSF51604">
    <property type="entry name" value="Enolase C-terminal domain-like"/>
    <property type="match status" value="1"/>
</dbReference>
<dbReference type="SUPFAM" id="SSF54826">
    <property type="entry name" value="Enolase N-terminal domain-like"/>
    <property type="match status" value="1"/>
</dbReference>
<dbReference type="PROSITE" id="PS00164">
    <property type="entry name" value="ENOLASE"/>
    <property type="match status" value="1"/>
</dbReference>
<keyword id="KW-0963">Cytoplasm</keyword>
<keyword id="KW-0324">Glycolysis</keyword>
<keyword id="KW-0456">Lyase</keyword>
<keyword id="KW-0460">Magnesium</keyword>
<keyword id="KW-0479">Metal-binding</keyword>
<keyword id="KW-1185">Reference proteome</keyword>
<keyword id="KW-0964">Secreted</keyword>
<accession>A2SJR2</accession>
<reference key="1">
    <citation type="journal article" date="2007" name="J. Bacteriol.">
        <title>Whole-genome analysis of the methyl tert-butyl ether-degrading beta-proteobacterium Methylibium petroleiphilum PM1.</title>
        <authorList>
            <person name="Kane S.R."/>
            <person name="Chakicherla A.Y."/>
            <person name="Chain P.S.G."/>
            <person name="Schmidt R."/>
            <person name="Shin M.W."/>
            <person name="Legler T.C."/>
            <person name="Scow K.M."/>
            <person name="Larimer F.W."/>
            <person name="Lucas S.M."/>
            <person name="Richardson P.M."/>
            <person name="Hristova K.R."/>
        </authorList>
    </citation>
    <scope>NUCLEOTIDE SEQUENCE [LARGE SCALE GENOMIC DNA]</scope>
    <source>
        <strain>ATCC BAA-1232 / LMG 22953 / PM1</strain>
    </source>
</reference>